<sequence length="1320" mass="138760">MSRRKQAKPQHLKSDEELPPQDGASEHGVPGDGAEDADSGSESRSGSEETSVCEKCCAEFFKWADFLQHKKTCTKNPLVLIVHDDEPAPPSEDFPEPSPASSPSDRTESEVAEEVAPTEGSEVKAATKEAEPMDVEVSTDKGPPGPSVPPPPPALPPQPEPAAFSMPSTNVTLETLLSTKVAVAQFSQGARAGGTTGAGGSVGAVAIPMILEQLVALQQQQIHQLQLIEQIRSQVALMSRQPGPPLKPSASAPGTASVQLQGLTPHAALQLSAGPATASAGSGSTLPAAFDGPQHLSQPASGTSTPCSTSAAPPDSGAHPACSTGPAPGAVAAASSTVGNAVQPQNASTPPALGPGPLLSSASNLPNPLLPQTSSSSVIFPNPLVSIAATANALDPLSALMKHRKGKPPNVSVFEPKASAEDPFFKHKCRFCAKVFGSDSALQIHLRSHTGERPFKCNICGNRFSTKGNLKVHFQRHKEKYPHIQMNPYPVPEYLDNVPTCSGIPYGMSLPPEKPVTTWLDSKPVLPTVPTSVGLQLPPTVPGTHNYTDSPSITPVSRSPQRPSPASSECTSLSPGLNNTESGITVRPESPQPLLGGPSLTKAEPVSLPCTSTRTGDAPVVGGQVSGLPTSAATAVTDSACTSLGSPGLPAVSDQFKAQFPFGGLLDSMQTSETSKLQQLVENIDKKMTDPNQCVICHRVLSCQSALKMHYRTHTGERPFKCKICGRAFTTKGNLKTHFGVHRAKPPLRVQHSCPICQKKFTNAVVLQQHIRMHMGGQIPNTPLPEGLQEAMDADLPFDEKNAETLSSFDDDIDENSMEEDSELKDTASDSSKPLLSYSGSCPPSPPSVISSIAALENQMKMIDSVMNCQQLANLKSVENGSGESDRLSNDSSSAVGDLESRSAGSPALSESSSSQALSPAHSNGESFRSKSPGLGHQEDPQEIPLKTERLDSPPPGPGNGGALDLTAGHPGRPLIKEEAPFSLLFLSRERGKCASTVCGVCGKPFACKSALEIHYRSHTKERRFVCTVCRRGCSTMGNLKQHLLTHKLKELPSQVFDPNFTLGPSHSTPSLASSPAPTMIKMEVNGHSKAIALGEGPALPAGVQVPTGPQTVMSPGLAPMLAPPPRRTPKQHNCQSCGKTFSSASALQIHERTHTGEKPFGCTICGRAFTTKGNLKVHMGTHMWNNAPARRGRRLSVENPMALLGGDALKFSEMFQKDLAARAMNVDPSFWNQYAAAITNGLAMKNNEISVIQNGGIPQLPVSLGGGAIPPLGAMASGVDKARTGSSPPIVSLDKASSETGASRPFARFIEDNKEIGIN</sequence>
<comment type="function">
    <text>Probable transcription factor.</text>
</comment>
<comment type="subcellular location">
    <subcellularLocation>
        <location evidence="7">Nucleus</location>
    </subcellularLocation>
</comment>
<comment type="alternative products">
    <event type="alternative splicing"/>
    <isoform>
        <id>Q62255-1</id>
        <name>1</name>
        <sequence type="displayed"/>
    </isoform>
    <isoform>
        <id>Q62255-2</id>
        <name>2</name>
        <sequence type="described" ref="VSP_006834"/>
    </isoform>
</comment>
<comment type="tissue specificity">
    <text>In adult brain, testis and kidney. In lower levels also in adult ovaries and embryonic stem cells. In embryo in developing neuroectoderm of brain, inner ear and spinal cord. Also weakly and transiently expressed in embryonic branchial arches, notochord, limb buds and heart.</text>
</comment>
<comment type="developmental stage">
    <text>During embryogenesis detected from 7 dpc onward in tissues derived from mesoderm and ectoderm.</text>
</comment>
<comment type="miscellaneous">
    <molecule>Isoform 2</molecule>
    <text evidence="7">Lacks two zinc finger domains (6 and 7) and is the major isoform.</text>
</comment>
<comment type="similarity">
    <text evidence="7">Belongs to the sal C2H2-type zinc-finger protein family.</text>
</comment>
<comment type="sequence caution" evidence="7">
    <conflict type="erroneous initiation">
        <sequence resource="EMBL-CDS" id="BAC32197"/>
    </conflict>
</comment>
<evidence type="ECO:0000250" key="1">
    <source>
        <dbReference type="UniProtKB" id="Q9BXA9"/>
    </source>
</evidence>
<evidence type="ECO:0000255" key="2">
    <source>
        <dbReference type="PROSITE-ProRule" id="PRU00042"/>
    </source>
</evidence>
<evidence type="ECO:0000256" key="3">
    <source>
        <dbReference type="SAM" id="MobiDB-lite"/>
    </source>
</evidence>
<evidence type="ECO:0000303" key="4">
    <source>
    </source>
</evidence>
<evidence type="ECO:0000303" key="5">
    <source>
    </source>
</evidence>
<evidence type="ECO:0000303" key="6">
    <source>
    </source>
</evidence>
<evidence type="ECO:0000305" key="7"/>
<accession>Q62255</accession>
<accession>Q08EB0</accession>
<accession>Q52KR5</accession>
<accession>Q6GQT8</accession>
<accession>Q8BRD9</accession>
<reference key="1">
    <citation type="journal article" date="2009" name="PLoS Biol.">
        <title>Lineage-specific biology revealed by a finished genome assembly of the mouse.</title>
        <authorList>
            <person name="Church D.M."/>
            <person name="Goodstadt L."/>
            <person name="Hillier L.W."/>
            <person name="Zody M.C."/>
            <person name="Goldstein S."/>
            <person name="She X."/>
            <person name="Bult C.J."/>
            <person name="Agarwala R."/>
            <person name="Cherry J.L."/>
            <person name="DiCuccio M."/>
            <person name="Hlavina W."/>
            <person name="Kapustin Y."/>
            <person name="Meric P."/>
            <person name="Maglott D."/>
            <person name="Birtle Z."/>
            <person name="Marques A.C."/>
            <person name="Graves T."/>
            <person name="Zhou S."/>
            <person name="Teague B."/>
            <person name="Potamousis K."/>
            <person name="Churas C."/>
            <person name="Place M."/>
            <person name="Herschleb J."/>
            <person name="Runnheim R."/>
            <person name="Forrest D."/>
            <person name="Amos-Landgraf J."/>
            <person name="Schwartz D.C."/>
            <person name="Cheng Z."/>
            <person name="Lindblad-Toh K."/>
            <person name="Eichler E.E."/>
            <person name="Ponting C.P."/>
        </authorList>
    </citation>
    <scope>NUCLEOTIDE SEQUENCE [LARGE SCALE GENOMIC DNA]</scope>
    <source>
        <strain>C57BL/6J</strain>
    </source>
</reference>
<reference key="2">
    <citation type="journal article" date="2004" name="Genome Res.">
        <title>The status, quality, and expansion of the NIH full-length cDNA project: the Mammalian Gene Collection (MGC).</title>
        <authorList>
            <consortium name="The MGC Project Team"/>
        </authorList>
    </citation>
    <scope>NUCLEOTIDE SEQUENCE [LARGE SCALE MRNA] OF 6-1320 (ISOFORM 2)</scope>
    <source>
        <strain>C57BL/6J</strain>
        <tissue>Brain</tissue>
    </source>
</reference>
<reference key="3">
    <citation type="journal article" date="1996" name="Mech. Dev.">
        <title>The mouse homolog of the region specific homeotic gene spalt of Drosophila is expressed in the developing nervous system and in mesoderm-derived structures.</title>
        <authorList>
            <person name="Ott T."/>
            <person name="Kaestner K.H."/>
            <person name="Monaghan A.P."/>
            <person name="Schuetz G."/>
        </authorList>
    </citation>
    <scope>NUCLEOTIDE SEQUENCE [MRNA] OF 30-1320 (ISOFORMS 1 AND 2)</scope>
    <source>
        <tissue>Brain</tissue>
        <tissue>Embryo</tissue>
    </source>
</reference>
<reference key="4">
    <citation type="journal article" date="2005" name="Science">
        <title>The transcriptional landscape of the mammalian genome.</title>
        <authorList>
            <person name="Carninci P."/>
            <person name="Kasukawa T."/>
            <person name="Katayama S."/>
            <person name="Gough J."/>
            <person name="Frith M.C."/>
            <person name="Maeda N."/>
            <person name="Oyama R."/>
            <person name="Ravasi T."/>
            <person name="Lenhard B."/>
            <person name="Wells C."/>
            <person name="Kodzius R."/>
            <person name="Shimokawa K."/>
            <person name="Bajic V.B."/>
            <person name="Brenner S.E."/>
            <person name="Batalov S."/>
            <person name="Forrest A.R."/>
            <person name="Zavolan M."/>
            <person name="Davis M.J."/>
            <person name="Wilming L.G."/>
            <person name="Aidinis V."/>
            <person name="Allen J.E."/>
            <person name="Ambesi-Impiombato A."/>
            <person name="Apweiler R."/>
            <person name="Aturaliya R.N."/>
            <person name="Bailey T.L."/>
            <person name="Bansal M."/>
            <person name="Baxter L."/>
            <person name="Beisel K.W."/>
            <person name="Bersano T."/>
            <person name="Bono H."/>
            <person name="Chalk A.M."/>
            <person name="Chiu K.P."/>
            <person name="Choudhary V."/>
            <person name="Christoffels A."/>
            <person name="Clutterbuck D.R."/>
            <person name="Crowe M.L."/>
            <person name="Dalla E."/>
            <person name="Dalrymple B.P."/>
            <person name="de Bono B."/>
            <person name="Della Gatta G."/>
            <person name="di Bernardo D."/>
            <person name="Down T."/>
            <person name="Engstrom P."/>
            <person name="Fagiolini M."/>
            <person name="Faulkner G."/>
            <person name="Fletcher C.F."/>
            <person name="Fukushima T."/>
            <person name="Furuno M."/>
            <person name="Futaki S."/>
            <person name="Gariboldi M."/>
            <person name="Georgii-Hemming P."/>
            <person name="Gingeras T.R."/>
            <person name="Gojobori T."/>
            <person name="Green R.E."/>
            <person name="Gustincich S."/>
            <person name="Harbers M."/>
            <person name="Hayashi Y."/>
            <person name="Hensch T.K."/>
            <person name="Hirokawa N."/>
            <person name="Hill D."/>
            <person name="Huminiecki L."/>
            <person name="Iacono M."/>
            <person name="Ikeo K."/>
            <person name="Iwama A."/>
            <person name="Ishikawa T."/>
            <person name="Jakt M."/>
            <person name="Kanapin A."/>
            <person name="Katoh M."/>
            <person name="Kawasawa Y."/>
            <person name="Kelso J."/>
            <person name="Kitamura H."/>
            <person name="Kitano H."/>
            <person name="Kollias G."/>
            <person name="Krishnan S.P."/>
            <person name="Kruger A."/>
            <person name="Kummerfeld S.K."/>
            <person name="Kurochkin I.V."/>
            <person name="Lareau L.F."/>
            <person name="Lazarevic D."/>
            <person name="Lipovich L."/>
            <person name="Liu J."/>
            <person name="Liuni S."/>
            <person name="McWilliam S."/>
            <person name="Madan Babu M."/>
            <person name="Madera M."/>
            <person name="Marchionni L."/>
            <person name="Matsuda H."/>
            <person name="Matsuzawa S."/>
            <person name="Miki H."/>
            <person name="Mignone F."/>
            <person name="Miyake S."/>
            <person name="Morris K."/>
            <person name="Mottagui-Tabar S."/>
            <person name="Mulder N."/>
            <person name="Nakano N."/>
            <person name="Nakauchi H."/>
            <person name="Ng P."/>
            <person name="Nilsson R."/>
            <person name="Nishiguchi S."/>
            <person name="Nishikawa S."/>
            <person name="Nori F."/>
            <person name="Ohara O."/>
            <person name="Okazaki Y."/>
            <person name="Orlando V."/>
            <person name="Pang K.C."/>
            <person name="Pavan W.J."/>
            <person name="Pavesi G."/>
            <person name="Pesole G."/>
            <person name="Petrovsky N."/>
            <person name="Piazza S."/>
            <person name="Reed J."/>
            <person name="Reid J.F."/>
            <person name="Ring B.Z."/>
            <person name="Ringwald M."/>
            <person name="Rost B."/>
            <person name="Ruan Y."/>
            <person name="Salzberg S.L."/>
            <person name="Sandelin A."/>
            <person name="Schneider C."/>
            <person name="Schoenbach C."/>
            <person name="Sekiguchi K."/>
            <person name="Semple C.A."/>
            <person name="Seno S."/>
            <person name="Sessa L."/>
            <person name="Sheng Y."/>
            <person name="Shibata Y."/>
            <person name="Shimada H."/>
            <person name="Shimada K."/>
            <person name="Silva D."/>
            <person name="Sinclair B."/>
            <person name="Sperling S."/>
            <person name="Stupka E."/>
            <person name="Sugiura K."/>
            <person name="Sultana R."/>
            <person name="Takenaka Y."/>
            <person name="Taki K."/>
            <person name="Tammoja K."/>
            <person name="Tan S.L."/>
            <person name="Tang S."/>
            <person name="Taylor M.S."/>
            <person name="Tegner J."/>
            <person name="Teichmann S.A."/>
            <person name="Ueda H.R."/>
            <person name="van Nimwegen E."/>
            <person name="Verardo R."/>
            <person name="Wei C.L."/>
            <person name="Yagi K."/>
            <person name="Yamanishi H."/>
            <person name="Zabarovsky E."/>
            <person name="Zhu S."/>
            <person name="Zimmer A."/>
            <person name="Hide W."/>
            <person name="Bult C."/>
            <person name="Grimmond S.M."/>
            <person name="Teasdale R.D."/>
            <person name="Liu E.T."/>
            <person name="Brusic V."/>
            <person name="Quackenbush J."/>
            <person name="Wahlestedt C."/>
            <person name="Mattick J.S."/>
            <person name="Hume D.A."/>
            <person name="Kai C."/>
            <person name="Sasaki D."/>
            <person name="Tomaru Y."/>
            <person name="Fukuda S."/>
            <person name="Kanamori-Katayama M."/>
            <person name="Suzuki M."/>
            <person name="Aoki J."/>
            <person name="Arakawa T."/>
            <person name="Iida J."/>
            <person name="Imamura K."/>
            <person name="Itoh M."/>
            <person name="Kato T."/>
            <person name="Kawaji H."/>
            <person name="Kawagashira N."/>
            <person name="Kawashima T."/>
            <person name="Kojima M."/>
            <person name="Kondo S."/>
            <person name="Konno H."/>
            <person name="Nakano K."/>
            <person name="Ninomiya N."/>
            <person name="Nishio T."/>
            <person name="Okada M."/>
            <person name="Plessy C."/>
            <person name="Shibata K."/>
            <person name="Shiraki T."/>
            <person name="Suzuki S."/>
            <person name="Tagami M."/>
            <person name="Waki K."/>
            <person name="Watahiki A."/>
            <person name="Okamura-Oho Y."/>
            <person name="Suzuki H."/>
            <person name="Kawai J."/>
            <person name="Hayashizaki Y."/>
        </authorList>
    </citation>
    <scope>NUCLEOTIDE SEQUENCE [LARGE SCALE MRNA] OF 692-1320</scope>
    <source>
        <strain>C57BL/6J</strain>
        <tissue>Embryo</tissue>
    </source>
</reference>
<reference key="5">
    <citation type="journal article" date="2006" name="Dev. Biol.">
        <title>The vertebrate spalt genes in development and disease.</title>
        <authorList>
            <person name="Sweetman D."/>
            <person name="Muensterberg A."/>
        </authorList>
    </citation>
    <scope>DOMAIN</scope>
</reference>
<reference key="6">
    <citation type="journal article" date="2010" name="Cell">
        <title>A tissue-specific atlas of mouse protein phosphorylation and expression.</title>
        <authorList>
            <person name="Huttlin E.L."/>
            <person name="Jedrychowski M.P."/>
            <person name="Elias J.E."/>
            <person name="Goswami T."/>
            <person name="Rad R."/>
            <person name="Beausoleil S.A."/>
            <person name="Villen J."/>
            <person name="Haas W."/>
            <person name="Sowa M.E."/>
            <person name="Gygi S.P."/>
        </authorList>
    </citation>
    <scope>IDENTIFICATION BY MASS SPECTROMETRY [LARGE SCALE ANALYSIS]</scope>
    <source>
        <tissue>Kidney</tissue>
    </source>
</reference>
<protein>
    <recommendedName>
        <fullName>Sal-like protein 3</fullName>
    </recommendedName>
    <alternativeName>
        <fullName>MSal</fullName>
    </alternativeName>
    <alternativeName>
        <fullName>Spalt-like protein 3</fullName>
    </alternativeName>
</protein>
<dbReference type="EMBL" id="AC125210">
    <property type="status" value="NOT_ANNOTATED_CDS"/>
    <property type="molecule type" value="Genomic_DNA"/>
</dbReference>
<dbReference type="EMBL" id="BC072631">
    <property type="protein sequence ID" value="AAH72631.1"/>
    <property type="molecule type" value="mRNA"/>
</dbReference>
<dbReference type="EMBL" id="AK045051">
    <property type="protein sequence ID" value="BAC32197.1"/>
    <property type="status" value="ALT_INIT"/>
    <property type="molecule type" value="mRNA"/>
</dbReference>
<dbReference type="EMBL" id="X97581">
    <property type="protein sequence ID" value="CAA66196.1"/>
    <property type="status" value="ALT_TERM"/>
    <property type="molecule type" value="mRNA"/>
</dbReference>
<dbReference type="CCDS" id="CCDS29371.1">
    <molecule id="Q62255-2"/>
</dbReference>
<dbReference type="CCDS" id="CCDS89289.1">
    <molecule id="Q62255-1"/>
</dbReference>
<dbReference type="PIR" id="T30253">
    <property type="entry name" value="T30253"/>
</dbReference>
<dbReference type="RefSeq" id="NP_840064.2">
    <molecule id="Q62255-2"/>
    <property type="nucleotide sequence ID" value="NM_178280.3"/>
</dbReference>
<dbReference type="BioGRID" id="203420">
    <property type="interactions" value="19"/>
</dbReference>
<dbReference type="FunCoup" id="Q62255">
    <property type="interactions" value="1116"/>
</dbReference>
<dbReference type="IntAct" id="Q62255">
    <property type="interactions" value="5"/>
</dbReference>
<dbReference type="MINT" id="Q62255"/>
<dbReference type="STRING" id="10090.ENSMUSP00000056967"/>
<dbReference type="GlyGen" id="Q62255">
    <property type="glycosylation" value="3 sites, 1 O-linked glycan (1 site)"/>
</dbReference>
<dbReference type="iPTMnet" id="Q62255"/>
<dbReference type="PhosphoSitePlus" id="Q62255"/>
<dbReference type="PaxDb" id="10090-ENSMUSP00000056967"/>
<dbReference type="PeptideAtlas" id="Q62255"/>
<dbReference type="ProteomicsDB" id="255454">
    <molecule id="Q62255-1"/>
</dbReference>
<dbReference type="ProteomicsDB" id="255455">
    <molecule id="Q62255-2"/>
</dbReference>
<dbReference type="Antibodypedia" id="49173">
    <property type="antibodies" value="24 antibodies from 12 providers"/>
</dbReference>
<dbReference type="DNASU" id="20689"/>
<dbReference type="Ensembl" id="ENSMUST00000057950.9">
    <molecule id="Q62255-2"/>
    <property type="protein sequence ID" value="ENSMUSP00000056967.8"/>
    <property type="gene ID" value="ENSMUSG00000024565.11"/>
</dbReference>
<dbReference type="GeneID" id="20689"/>
<dbReference type="KEGG" id="mmu:20689"/>
<dbReference type="UCSC" id="uc008ftl.2">
    <molecule id="Q62255-1"/>
    <property type="organism name" value="mouse"/>
</dbReference>
<dbReference type="UCSC" id="uc008ftm.1">
    <molecule id="Q62255-2"/>
    <property type="organism name" value="mouse"/>
</dbReference>
<dbReference type="AGR" id="MGI:109295"/>
<dbReference type="CTD" id="27164"/>
<dbReference type="MGI" id="MGI:109295">
    <property type="gene designation" value="Sall3"/>
</dbReference>
<dbReference type="VEuPathDB" id="HostDB:ENSMUSG00000024565"/>
<dbReference type="eggNOG" id="KOG1074">
    <property type="taxonomic scope" value="Eukaryota"/>
</dbReference>
<dbReference type="GeneTree" id="ENSGT00940000159356"/>
<dbReference type="HOGENOM" id="CLU_005740_0_0_1"/>
<dbReference type="InParanoid" id="Q62255"/>
<dbReference type="PhylomeDB" id="Q62255"/>
<dbReference type="TreeFam" id="TF317003"/>
<dbReference type="BioGRID-ORCS" id="20689">
    <property type="hits" value="2 hits in 78 CRISPR screens"/>
</dbReference>
<dbReference type="PRO" id="PR:Q62255"/>
<dbReference type="Proteomes" id="UP000000589">
    <property type="component" value="Chromosome 18"/>
</dbReference>
<dbReference type="RNAct" id="Q62255">
    <property type="molecule type" value="protein"/>
</dbReference>
<dbReference type="Bgee" id="ENSMUSG00000024565">
    <property type="expression patterns" value="Expressed in spinal cord mantle layer and 115 other cell types or tissues"/>
</dbReference>
<dbReference type="ExpressionAtlas" id="Q62255">
    <property type="expression patterns" value="baseline and differential"/>
</dbReference>
<dbReference type="GO" id="GO:0005634">
    <property type="term" value="C:nucleus"/>
    <property type="evidence" value="ECO:0007669"/>
    <property type="project" value="UniProtKB-SubCell"/>
</dbReference>
<dbReference type="GO" id="GO:0003677">
    <property type="term" value="F:DNA binding"/>
    <property type="evidence" value="ECO:0007669"/>
    <property type="project" value="UniProtKB-KW"/>
</dbReference>
<dbReference type="GO" id="GO:0008270">
    <property type="term" value="F:zinc ion binding"/>
    <property type="evidence" value="ECO:0007669"/>
    <property type="project" value="UniProtKB-KW"/>
</dbReference>
<dbReference type="GO" id="GO:0035136">
    <property type="term" value="P:forelimb morphogenesis"/>
    <property type="evidence" value="ECO:0000316"/>
    <property type="project" value="MGI"/>
</dbReference>
<dbReference type="GO" id="GO:0035137">
    <property type="term" value="P:hindlimb morphogenesis"/>
    <property type="evidence" value="ECO:0000316"/>
    <property type="project" value="MGI"/>
</dbReference>
<dbReference type="GO" id="GO:0045879">
    <property type="term" value="P:negative regulation of smoothened signaling pathway"/>
    <property type="evidence" value="ECO:0000316"/>
    <property type="project" value="MGI"/>
</dbReference>
<dbReference type="GO" id="GO:0021891">
    <property type="term" value="P:olfactory bulb interneuron development"/>
    <property type="evidence" value="ECO:0000315"/>
    <property type="project" value="MGI"/>
</dbReference>
<dbReference type="GO" id="GO:0007224">
    <property type="term" value="P:smoothened signaling pathway"/>
    <property type="evidence" value="ECO:0000316"/>
    <property type="project" value="MGI"/>
</dbReference>
<dbReference type="CDD" id="cd20908">
    <property type="entry name" value="SUF4-like"/>
    <property type="match status" value="1"/>
</dbReference>
<dbReference type="FunFam" id="3.30.160.60:FF:000708">
    <property type="entry name" value="Sal-like protein 1"/>
    <property type="match status" value="1"/>
</dbReference>
<dbReference type="FunFam" id="3.30.160.60:FF:002951">
    <property type="entry name" value="Sal-like protein 3"/>
    <property type="match status" value="1"/>
</dbReference>
<dbReference type="FunFam" id="3.30.160.60:FF:000689">
    <property type="entry name" value="Spalt like transcription factor 1"/>
    <property type="match status" value="1"/>
</dbReference>
<dbReference type="FunFam" id="3.30.160.60:FF:000961">
    <property type="entry name" value="Spalt like transcription factor 3"/>
    <property type="match status" value="1"/>
</dbReference>
<dbReference type="FunFam" id="3.30.160.60:FF:000025">
    <property type="entry name" value="Spalt-like transcription factor 1"/>
    <property type="match status" value="1"/>
</dbReference>
<dbReference type="FunFam" id="3.30.160.60:FF:000260">
    <property type="entry name" value="Spalt-like transcription factor 1"/>
    <property type="match status" value="1"/>
</dbReference>
<dbReference type="FunFam" id="3.30.160.60:FF:000341">
    <property type="entry name" value="Spalt-like transcription factor 1"/>
    <property type="match status" value="1"/>
</dbReference>
<dbReference type="FunFam" id="3.30.160.60:FF:000215">
    <property type="entry name" value="Spalt-like transcription factor 3"/>
    <property type="match status" value="1"/>
</dbReference>
<dbReference type="Gene3D" id="3.30.160.60">
    <property type="entry name" value="Classic Zinc Finger"/>
    <property type="match status" value="8"/>
</dbReference>
<dbReference type="InterPro" id="IPR051565">
    <property type="entry name" value="Sal_C2H2-zinc-finger"/>
</dbReference>
<dbReference type="InterPro" id="IPR036236">
    <property type="entry name" value="Znf_C2H2_sf"/>
</dbReference>
<dbReference type="InterPro" id="IPR013087">
    <property type="entry name" value="Znf_C2H2_type"/>
</dbReference>
<dbReference type="PANTHER" id="PTHR23233">
    <property type="entry name" value="SAL-LIKE PROTEIN"/>
    <property type="match status" value="1"/>
</dbReference>
<dbReference type="PANTHER" id="PTHR23233:SF46">
    <property type="entry name" value="SAL-LIKE PROTEIN 3"/>
    <property type="match status" value="1"/>
</dbReference>
<dbReference type="Pfam" id="PF00096">
    <property type="entry name" value="zf-C2H2"/>
    <property type="match status" value="5"/>
</dbReference>
<dbReference type="Pfam" id="PF12874">
    <property type="entry name" value="zf-met"/>
    <property type="match status" value="1"/>
</dbReference>
<dbReference type="SMART" id="SM00355">
    <property type="entry name" value="ZnF_C2H2"/>
    <property type="match status" value="9"/>
</dbReference>
<dbReference type="SUPFAM" id="SSF57667">
    <property type="entry name" value="beta-beta-alpha zinc fingers"/>
    <property type="match status" value="5"/>
</dbReference>
<dbReference type="PROSITE" id="PS00028">
    <property type="entry name" value="ZINC_FINGER_C2H2_1"/>
    <property type="match status" value="9"/>
</dbReference>
<dbReference type="PROSITE" id="PS50157">
    <property type="entry name" value="ZINC_FINGER_C2H2_2"/>
    <property type="match status" value="8"/>
</dbReference>
<gene>
    <name type="primary">Sall3</name>
    <name type="synonym">Sal</name>
</gene>
<keyword id="KW-0025">Alternative splicing</keyword>
<keyword id="KW-0238">DNA-binding</keyword>
<keyword id="KW-0479">Metal-binding</keyword>
<keyword id="KW-0539">Nucleus</keyword>
<keyword id="KW-0597">Phosphoprotein</keyword>
<keyword id="KW-1185">Reference proteome</keyword>
<keyword id="KW-0677">Repeat</keyword>
<keyword id="KW-0804">Transcription</keyword>
<keyword id="KW-0805">Transcription regulation</keyword>
<keyword id="KW-0862">Zinc</keyword>
<keyword id="KW-0863">Zinc-finger</keyword>
<name>SALL3_MOUSE</name>
<organism>
    <name type="scientific">Mus musculus</name>
    <name type="common">Mouse</name>
    <dbReference type="NCBI Taxonomy" id="10090"/>
    <lineage>
        <taxon>Eukaryota</taxon>
        <taxon>Metazoa</taxon>
        <taxon>Chordata</taxon>
        <taxon>Craniata</taxon>
        <taxon>Vertebrata</taxon>
        <taxon>Euteleostomi</taxon>
        <taxon>Mammalia</taxon>
        <taxon>Eutheria</taxon>
        <taxon>Euarchontoglires</taxon>
        <taxon>Glires</taxon>
        <taxon>Rodentia</taxon>
        <taxon>Myomorpha</taxon>
        <taxon>Muroidea</taxon>
        <taxon>Muridae</taxon>
        <taxon>Murinae</taxon>
        <taxon>Mus</taxon>
        <taxon>Mus</taxon>
    </lineage>
</organism>
<feature type="chain" id="PRO_0000047025" description="Sal-like protein 3">
    <location>
        <begin position="1"/>
        <end position="1320"/>
    </location>
</feature>
<feature type="zinc finger region" description="C2H2-type 1; atypical" evidence="5">
    <location>
        <begin position="51"/>
        <end position="73"/>
    </location>
</feature>
<feature type="zinc finger region" description="C2H2-type 2" evidence="2">
    <location>
        <begin position="427"/>
        <end position="449"/>
    </location>
</feature>
<feature type="zinc finger region" description="C2H2-type 3" evidence="2">
    <location>
        <begin position="455"/>
        <end position="477"/>
    </location>
</feature>
<feature type="zinc finger region" description="C2H2-type 4" evidence="2">
    <location>
        <begin position="692"/>
        <end position="714"/>
    </location>
</feature>
<feature type="zinc finger region" description="C2H2-type 5" evidence="2">
    <location>
        <begin position="720"/>
        <end position="742"/>
    </location>
</feature>
<feature type="zinc finger region" description="C2H2-type 6" evidence="2">
    <location>
        <begin position="752"/>
        <end position="774"/>
    </location>
</feature>
<feature type="zinc finger region" description="C2H2-type 7" evidence="2">
    <location>
        <begin position="997"/>
        <end position="1019"/>
    </location>
</feature>
<feature type="zinc finger region" description="C2H2-type 8" evidence="2">
    <location>
        <begin position="1025"/>
        <end position="1047"/>
    </location>
</feature>
<feature type="zinc finger region" description="C2H2-type 9" evidence="2">
    <location>
        <begin position="1133"/>
        <end position="1155"/>
    </location>
</feature>
<feature type="zinc finger region" description="C2H2-type 10" evidence="2">
    <location>
        <begin position="1161"/>
        <end position="1183"/>
    </location>
</feature>
<feature type="region of interest" description="Disordered" evidence="3">
    <location>
        <begin position="1"/>
        <end position="49"/>
    </location>
</feature>
<feature type="region of interest" description="Disordered" evidence="3">
    <location>
        <begin position="84"/>
        <end position="166"/>
    </location>
</feature>
<feature type="region of interest" description="Disordered" evidence="3">
    <location>
        <begin position="271"/>
        <end position="367"/>
    </location>
</feature>
<feature type="region of interest" description="Disordered" evidence="3">
    <location>
        <begin position="534"/>
        <end position="623"/>
    </location>
</feature>
<feature type="region of interest" description="Disordered" evidence="3">
    <location>
        <begin position="807"/>
        <end position="846"/>
    </location>
</feature>
<feature type="region of interest" description="Disordered" evidence="3">
    <location>
        <begin position="878"/>
        <end position="972"/>
    </location>
</feature>
<feature type="compositionally biased region" description="Basic residues" evidence="3">
    <location>
        <begin position="1"/>
        <end position="11"/>
    </location>
</feature>
<feature type="compositionally biased region" description="Low complexity" evidence="3">
    <location>
        <begin position="40"/>
        <end position="49"/>
    </location>
</feature>
<feature type="compositionally biased region" description="Pro residues" evidence="3">
    <location>
        <begin position="88"/>
        <end position="100"/>
    </location>
</feature>
<feature type="compositionally biased region" description="Basic and acidic residues" evidence="3">
    <location>
        <begin position="121"/>
        <end position="131"/>
    </location>
</feature>
<feature type="compositionally biased region" description="Pro residues" evidence="3">
    <location>
        <begin position="143"/>
        <end position="160"/>
    </location>
</feature>
<feature type="compositionally biased region" description="Low complexity" evidence="3">
    <location>
        <begin position="271"/>
        <end position="289"/>
    </location>
</feature>
<feature type="compositionally biased region" description="Polar residues" evidence="3">
    <location>
        <begin position="295"/>
        <end position="311"/>
    </location>
</feature>
<feature type="compositionally biased region" description="Low complexity" evidence="3">
    <location>
        <begin position="323"/>
        <end position="342"/>
    </location>
</feature>
<feature type="compositionally biased region" description="Low complexity" evidence="3">
    <location>
        <begin position="355"/>
        <end position="367"/>
    </location>
</feature>
<feature type="compositionally biased region" description="Polar residues" evidence="3">
    <location>
        <begin position="543"/>
        <end position="554"/>
    </location>
</feature>
<feature type="compositionally biased region" description="Low complexity" evidence="3">
    <location>
        <begin position="555"/>
        <end position="568"/>
    </location>
</feature>
<feature type="compositionally biased region" description="Polar residues" evidence="3">
    <location>
        <begin position="569"/>
        <end position="583"/>
    </location>
</feature>
<feature type="compositionally biased region" description="Acidic residues" evidence="3">
    <location>
        <begin position="809"/>
        <end position="823"/>
    </location>
</feature>
<feature type="compositionally biased region" description="Low complexity" evidence="3">
    <location>
        <begin position="834"/>
        <end position="846"/>
    </location>
</feature>
<feature type="compositionally biased region" description="Low complexity" evidence="3">
    <location>
        <begin position="902"/>
        <end position="923"/>
    </location>
</feature>
<feature type="modified residue" description="Phosphoserine" evidence="1">
    <location>
        <position position="109"/>
    </location>
</feature>
<feature type="modified residue" description="Phosphoserine" evidence="1">
    <location>
        <position position="932"/>
    </location>
</feature>
<feature type="modified residue" description="Phosphoserine" evidence="1">
    <location>
        <position position="1197"/>
    </location>
</feature>
<feature type="splice variant" id="VSP_006834" description="In isoform 2." evidence="4 6">
    <location>
        <begin position="993"/>
        <end position="1064"/>
    </location>
</feature>
<feature type="sequence conflict" description="In Ref. 3; CAA66196." evidence="7" ref="3">
    <original>EP</original>
    <variation>S</variation>
    <location>
        <begin position="131"/>
        <end position="132"/>
    </location>
</feature>
<feature type="sequence conflict" description="In Ref. 3; CAA66196." evidence="7" ref="3">
    <original>A</original>
    <variation>G</variation>
    <location>
        <position position="236"/>
    </location>
</feature>
<feature type="sequence conflict" description="In Ref. 3; CAA66196." evidence="7" ref="3">
    <original>TA</original>
    <variation>NT</variation>
    <location>
        <begin position="255"/>
        <end position="256"/>
    </location>
</feature>
<feature type="sequence conflict" description="In Ref. 3; CAA66196." evidence="7" ref="3">
    <original>C</original>
    <variation>CC</variation>
    <location>
        <position position="307"/>
    </location>
</feature>
<feature type="sequence conflict" description="In Ref. 3; CAA66196." evidence="7" ref="3">
    <original>NV</original>
    <variation>KC</variation>
    <location>
        <begin position="497"/>
        <end position="498"/>
    </location>
</feature>
<feature type="sequence conflict" description="In Ref. 3; CAA66196." evidence="7" ref="3">
    <original>A</original>
    <variation>G</variation>
    <location>
        <position position="744"/>
    </location>
</feature>
<feature type="sequence conflict" description="In Ref. 4; BAC32197." evidence="7" ref="4">
    <original>V</original>
    <variation>I</variation>
    <location>
        <position position="765"/>
    </location>
</feature>
<proteinExistence type="evidence at protein level"/>